<comment type="function">
    <text evidence="1">Together with its co-chaperonin GroES, plays an essential role in assisting protein folding. The GroEL-GroES system forms a nano-cage that allows encapsulation of the non-native substrate proteins and provides a physical environment optimized to promote and accelerate protein folding.</text>
</comment>
<comment type="catalytic activity">
    <reaction evidence="1">
        <text>ATP + H2O + a folded polypeptide = ADP + phosphate + an unfolded polypeptide.</text>
        <dbReference type="EC" id="5.6.1.7"/>
    </reaction>
</comment>
<comment type="subunit">
    <text evidence="1">Forms a cylinder of 14 subunits composed of two heptameric rings stacked back-to-back. Interacts with the co-chaperonin GroES.</text>
</comment>
<comment type="subcellular location">
    <subcellularLocation>
        <location evidence="1">Cytoplasm</location>
    </subcellularLocation>
</comment>
<comment type="similarity">
    <text evidence="1">Belongs to the chaperonin (HSP60) family.</text>
</comment>
<proteinExistence type="inferred from homology"/>
<dbReference type="EC" id="5.6.1.7" evidence="1"/>
<dbReference type="EMBL" id="CP000675">
    <property type="protein sequence ID" value="ABQ56521.1"/>
    <property type="molecule type" value="Genomic_DNA"/>
</dbReference>
<dbReference type="SMR" id="A5IGM1"/>
<dbReference type="KEGG" id="lpc:LPC_2606"/>
<dbReference type="HOGENOM" id="CLU_016503_3_0_6"/>
<dbReference type="GO" id="GO:0005737">
    <property type="term" value="C:cytoplasm"/>
    <property type="evidence" value="ECO:0007669"/>
    <property type="project" value="UniProtKB-SubCell"/>
</dbReference>
<dbReference type="GO" id="GO:0005524">
    <property type="term" value="F:ATP binding"/>
    <property type="evidence" value="ECO:0007669"/>
    <property type="project" value="UniProtKB-UniRule"/>
</dbReference>
<dbReference type="GO" id="GO:0140662">
    <property type="term" value="F:ATP-dependent protein folding chaperone"/>
    <property type="evidence" value="ECO:0007669"/>
    <property type="project" value="InterPro"/>
</dbReference>
<dbReference type="GO" id="GO:0016853">
    <property type="term" value="F:isomerase activity"/>
    <property type="evidence" value="ECO:0007669"/>
    <property type="project" value="UniProtKB-KW"/>
</dbReference>
<dbReference type="GO" id="GO:0051082">
    <property type="term" value="F:unfolded protein binding"/>
    <property type="evidence" value="ECO:0007669"/>
    <property type="project" value="UniProtKB-UniRule"/>
</dbReference>
<dbReference type="GO" id="GO:0042026">
    <property type="term" value="P:protein refolding"/>
    <property type="evidence" value="ECO:0007669"/>
    <property type="project" value="UniProtKB-UniRule"/>
</dbReference>
<dbReference type="CDD" id="cd03344">
    <property type="entry name" value="GroEL"/>
    <property type="match status" value="1"/>
</dbReference>
<dbReference type="FunFam" id="1.10.560.10:FF:000001">
    <property type="entry name" value="60 kDa chaperonin"/>
    <property type="match status" value="1"/>
</dbReference>
<dbReference type="FunFam" id="3.50.7.10:FF:000001">
    <property type="entry name" value="60 kDa chaperonin"/>
    <property type="match status" value="1"/>
</dbReference>
<dbReference type="Gene3D" id="3.50.7.10">
    <property type="entry name" value="GroEL"/>
    <property type="match status" value="1"/>
</dbReference>
<dbReference type="Gene3D" id="1.10.560.10">
    <property type="entry name" value="GroEL-like equatorial domain"/>
    <property type="match status" value="1"/>
</dbReference>
<dbReference type="Gene3D" id="3.30.260.10">
    <property type="entry name" value="TCP-1-like chaperonin intermediate domain"/>
    <property type="match status" value="1"/>
</dbReference>
<dbReference type="HAMAP" id="MF_00600">
    <property type="entry name" value="CH60"/>
    <property type="match status" value="1"/>
</dbReference>
<dbReference type="InterPro" id="IPR018370">
    <property type="entry name" value="Chaperonin_Cpn60_CS"/>
</dbReference>
<dbReference type="InterPro" id="IPR001844">
    <property type="entry name" value="Cpn60/GroEL"/>
</dbReference>
<dbReference type="InterPro" id="IPR002423">
    <property type="entry name" value="Cpn60/GroEL/TCP-1"/>
</dbReference>
<dbReference type="InterPro" id="IPR027409">
    <property type="entry name" value="GroEL-like_apical_dom_sf"/>
</dbReference>
<dbReference type="InterPro" id="IPR027413">
    <property type="entry name" value="GROEL-like_equatorial_sf"/>
</dbReference>
<dbReference type="InterPro" id="IPR027410">
    <property type="entry name" value="TCP-1-like_intermed_sf"/>
</dbReference>
<dbReference type="NCBIfam" id="TIGR02348">
    <property type="entry name" value="GroEL"/>
    <property type="match status" value="1"/>
</dbReference>
<dbReference type="NCBIfam" id="NF000592">
    <property type="entry name" value="PRK00013.1"/>
    <property type="match status" value="1"/>
</dbReference>
<dbReference type="NCBIfam" id="NF009487">
    <property type="entry name" value="PRK12849.1"/>
    <property type="match status" value="1"/>
</dbReference>
<dbReference type="NCBIfam" id="NF009488">
    <property type="entry name" value="PRK12850.1"/>
    <property type="match status" value="1"/>
</dbReference>
<dbReference type="NCBIfam" id="NF009489">
    <property type="entry name" value="PRK12851.1"/>
    <property type="match status" value="1"/>
</dbReference>
<dbReference type="PANTHER" id="PTHR45633">
    <property type="entry name" value="60 KDA HEAT SHOCK PROTEIN, MITOCHONDRIAL"/>
    <property type="match status" value="1"/>
</dbReference>
<dbReference type="Pfam" id="PF00118">
    <property type="entry name" value="Cpn60_TCP1"/>
    <property type="match status" value="1"/>
</dbReference>
<dbReference type="PRINTS" id="PR00298">
    <property type="entry name" value="CHAPERONIN60"/>
</dbReference>
<dbReference type="SUPFAM" id="SSF52029">
    <property type="entry name" value="GroEL apical domain-like"/>
    <property type="match status" value="1"/>
</dbReference>
<dbReference type="SUPFAM" id="SSF48592">
    <property type="entry name" value="GroEL equatorial domain-like"/>
    <property type="match status" value="1"/>
</dbReference>
<dbReference type="SUPFAM" id="SSF54849">
    <property type="entry name" value="GroEL-intermediate domain like"/>
    <property type="match status" value="1"/>
</dbReference>
<dbReference type="PROSITE" id="PS00296">
    <property type="entry name" value="CHAPERONINS_CPN60"/>
    <property type="match status" value="1"/>
</dbReference>
<reference key="1">
    <citation type="submission" date="2006-11" db="EMBL/GenBank/DDBJ databases">
        <title>Identification and characterization of a new conjugation/ type IVA secretion system (trb/tra) of L. pneumophila Corby localized on a mobile genomic island.</title>
        <authorList>
            <person name="Gloeckner G."/>
            <person name="Albert-Weissenberger C."/>
            <person name="Weinmann E."/>
            <person name="Jacobi S."/>
            <person name="Schunder E."/>
            <person name="Steinert M."/>
            <person name="Buchrieser C."/>
            <person name="Hacker J."/>
            <person name="Heuner K."/>
        </authorList>
    </citation>
    <scope>NUCLEOTIDE SEQUENCE [LARGE SCALE GENOMIC DNA]</scope>
    <source>
        <strain>Corby</strain>
    </source>
</reference>
<name>CH60_LEGPC</name>
<organism>
    <name type="scientific">Legionella pneumophila (strain Corby)</name>
    <dbReference type="NCBI Taxonomy" id="400673"/>
    <lineage>
        <taxon>Bacteria</taxon>
        <taxon>Pseudomonadati</taxon>
        <taxon>Pseudomonadota</taxon>
        <taxon>Gammaproteobacteria</taxon>
        <taxon>Legionellales</taxon>
        <taxon>Legionellaceae</taxon>
        <taxon>Legionella</taxon>
    </lineage>
</organism>
<sequence>MAKELRFGDDARLQMLAGVNALADAVQVTMGPRGRNVVLEKSYGAPTVTKDGVSVAKEIEFEHRFMNMGAQMVKEVASKTSDTAGDGTTTATVLARSILVEGHKAVAAGMNPMDLKRGIDKAVLAVTKKLQAMSKPCKDSKAIAQVGTISANSDEAIGAIIAEAMEKVGKEGVITVEDGNGLENELSVVEGMQFDRGYISPYFINNQQNMSCELEHPFILLVDKKVSSIREMLSVLEGVAKSGRPLLIIAEDVEGEALATLVVNNMRGIVKVCAVKAPGFGDRRKAMLQDIAILTKGQVISEEIGKSLEGATLEDLGSAKRIVVTKENTTVIDGEGKATEINARIAQIRAQMEETTSDYDREKLQERVAKLAGGVAVIKVGAATEVEMKEKKARVEDALHATRAAVEEGIVAGGGVALIRAQKALDSLKGDNDDQNMGINILRRAIESPMRQIVTNAGYEASVVVNKVAEHKDNYGFNAATGEYGDMVEMGILDPTKVTRMALQNAASVASLMLTTECMVADLPKKEEGVGAGDMGGMGGMGGMGGMM</sequence>
<protein>
    <recommendedName>
        <fullName evidence="1">Chaperonin GroEL</fullName>
        <ecNumber evidence="1">5.6.1.7</ecNumber>
    </recommendedName>
    <alternativeName>
        <fullName evidence="1">60 kDa chaperonin</fullName>
    </alternativeName>
    <alternativeName>
        <fullName evidence="1">Chaperonin-60</fullName>
        <shortName evidence="1">Cpn60</shortName>
    </alternativeName>
</protein>
<evidence type="ECO:0000255" key="1">
    <source>
        <dbReference type="HAMAP-Rule" id="MF_00600"/>
    </source>
</evidence>
<gene>
    <name evidence="1" type="primary">groEL</name>
    <name evidence="1" type="synonym">groL</name>
    <name type="ordered locus">LPC_2606</name>
</gene>
<accession>A5IGM1</accession>
<keyword id="KW-0067">ATP-binding</keyword>
<keyword id="KW-0143">Chaperone</keyword>
<keyword id="KW-0963">Cytoplasm</keyword>
<keyword id="KW-0413">Isomerase</keyword>
<keyword id="KW-0547">Nucleotide-binding</keyword>
<keyword id="KW-0346">Stress response</keyword>
<feature type="chain" id="PRO_1000025802" description="Chaperonin GroEL">
    <location>
        <begin position="1"/>
        <end position="548"/>
    </location>
</feature>
<feature type="binding site" evidence="1">
    <location>
        <begin position="29"/>
        <end position="32"/>
    </location>
    <ligand>
        <name>ATP</name>
        <dbReference type="ChEBI" id="CHEBI:30616"/>
    </ligand>
</feature>
<feature type="binding site" evidence="1">
    <location>
        <position position="50"/>
    </location>
    <ligand>
        <name>ATP</name>
        <dbReference type="ChEBI" id="CHEBI:30616"/>
    </ligand>
</feature>
<feature type="binding site" evidence="1">
    <location>
        <begin position="86"/>
        <end position="90"/>
    </location>
    <ligand>
        <name>ATP</name>
        <dbReference type="ChEBI" id="CHEBI:30616"/>
    </ligand>
</feature>
<feature type="binding site" evidence="1">
    <location>
        <position position="414"/>
    </location>
    <ligand>
        <name>ATP</name>
        <dbReference type="ChEBI" id="CHEBI:30616"/>
    </ligand>
</feature>
<feature type="binding site" evidence="1">
    <location>
        <begin position="478"/>
        <end position="480"/>
    </location>
    <ligand>
        <name>ATP</name>
        <dbReference type="ChEBI" id="CHEBI:30616"/>
    </ligand>
</feature>
<feature type="binding site" evidence="1">
    <location>
        <position position="494"/>
    </location>
    <ligand>
        <name>ATP</name>
        <dbReference type="ChEBI" id="CHEBI:30616"/>
    </ligand>
</feature>